<reference key="1">
    <citation type="submission" date="2006-06" db="EMBL/GenBank/DDBJ databases">
        <title>Complete sequence of Pseudoalteromonas atlantica T6c.</title>
        <authorList>
            <consortium name="US DOE Joint Genome Institute"/>
            <person name="Copeland A."/>
            <person name="Lucas S."/>
            <person name="Lapidus A."/>
            <person name="Barry K."/>
            <person name="Detter J.C."/>
            <person name="Glavina del Rio T."/>
            <person name="Hammon N."/>
            <person name="Israni S."/>
            <person name="Dalin E."/>
            <person name="Tice H."/>
            <person name="Pitluck S."/>
            <person name="Saunders E."/>
            <person name="Brettin T."/>
            <person name="Bruce D."/>
            <person name="Han C."/>
            <person name="Tapia R."/>
            <person name="Gilna P."/>
            <person name="Schmutz J."/>
            <person name="Larimer F."/>
            <person name="Land M."/>
            <person name="Hauser L."/>
            <person name="Kyrpides N."/>
            <person name="Kim E."/>
            <person name="Karls A.C."/>
            <person name="Bartlett D."/>
            <person name="Higgins B.P."/>
            <person name="Richardson P."/>
        </authorList>
    </citation>
    <scope>NUCLEOTIDE SEQUENCE [LARGE SCALE GENOMIC DNA]</scope>
    <source>
        <strain>T6c / ATCC BAA-1087</strain>
    </source>
</reference>
<gene>
    <name evidence="1" type="primary">hscB</name>
    <name type="ordered locus">Patl_1241</name>
</gene>
<name>HSCB_PSEA6</name>
<organism>
    <name type="scientific">Pseudoalteromonas atlantica (strain T6c / ATCC BAA-1087)</name>
    <dbReference type="NCBI Taxonomy" id="3042615"/>
    <lineage>
        <taxon>Bacteria</taxon>
        <taxon>Pseudomonadati</taxon>
        <taxon>Pseudomonadota</taxon>
        <taxon>Gammaproteobacteria</taxon>
        <taxon>Alteromonadales</taxon>
        <taxon>Alteromonadaceae</taxon>
        <taxon>Paraglaciecola</taxon>
    </lineage>
</organism>
<keyword id="KW-0143">Chaperone</keyword>
<proteinExistence type="inferred from homology"/>
<comment type="function">
    <text evidence="1">Co-chaperone involved in the maturation of iron-sulfur cluster-containing proteins. Seems to help targeting proteins to be folded toward HscA.</text>
</comment>
<comment type="subunit">
    <text evidence="1">Interacts with HscA and stimulates its ATPase activity.</text>
</comment>
<comment type="similarity">
    <text evidence="1">Belongs to the HscB family.</text>
</comment>
<accession>Q15WH1</accession>
<protein>
    <recommendedName>
        <fullName evidence="1">Co-chaperone protein HscB homolog</fullName>
    </recommendedName>
</protein>
<dbReference type="EMBL" id="CP000388">
    <property type="protein sequence ID" value="ABG39767.1"/>
    <property type="molecule type" value="Genomic_DNA"/>
</dbReference>
<dbReference type="RefSeq" id="WP_011574095.1">
    <property type="nucleotide sequence ID" value="NC_008228.1"/>
</dbReference>
<dbReference type="SMR" id="Q15WH1"/>
<dbReference type="STRING" id="342610.Patl_1241"/>
<dbReference type="KEGG" id="pat:Patl_1241"/>
<dbReference type="eggNOG" id="COG1076">
    <property type="taxonomic scope" value="Bacteria"/>
</dbReference>
<dbReference type="HOGENOM" id="CLU_068529_2_0_6"/>
<dbReference type="OrthoDB" id="287587at2"/>
<dbReference type="Proteomes" id="UP000001981">
    <property type="component" value="Chromosome"/>
</dbReference>
<dbReference type="GO" id="GO:1990230">
    <property type="term" value="C:iron-sulfur cluster transfer complex"/>
    <property type="evidence" value="ECO:0007669"/>
    <property type="project" value="TreeGrafter"/>
</dbReference>
<dbReference type="GO" id="GO:0001671">
    <property type="term" value="F:ATPase activator activity"/>
    <property type="evidence" value="ECO:0007669"/>
    <property type="project" value="InterPro"/>
</dbReference>
<dbReference type="GO" id="GO:0051087">
    <property type="term" value="F:protein-folding chaperone binding"/>
    <property type="evidence" value="ECO:0007669"/>
    <property type="project" value="InterPro"/>
</dbReference>
<dbReference type="GO" id="GO:0044571">
    <property type="term" value="P:[2Fe-2S] cluster assembly"/>
    <property type="evidence" value="ECO:0007669"/>
    <property type="project" value="InterPro"/>
</dbReference>
<dbReference type="GO" id="GO:0051259">
    <property type="term" value="P:protein complex oligomerization"/>
    <property type="evidence" value="ECO:0007669"/>
    <property type="project" value="InterPro"/>
</dbReference>
<dbReference type="GO" id="GO:0006457">
    <property type="term" value="P:protein folding"/>
    <property type="evidence" value="ECO:0007669"/>
    <property type="project" value="UniProtKB-UniRule"/>
</dbReference>
<dbReference type="Gene3D" id="1.10.287.110">
    <property type="entry name" value="DnaJ domain"/>
    <property type="match status" value="1"/>
</dbReference>
<dbReference type="Gene3D" id="1.20.1280.20">
    <property type="entry name" value="HscB, C-terminal domain"/>
    <property type="match status" value="1"/>
</dbReference>
<dbReference type="HAMAP" id="MF_00682">
    <property type="entry name" value="HscB"/>
    <property type="match status" value="1"/>
</dbReference>
<dbReference type="InterPro" id="IPR001623">
    <property type="entry name" value="DnaJ_domain"/>
</dbReference>
<dbReference type="InterPro" id="IPR004640">
    <property type="entry name" value="HscB"/>
</dbReference>
<dbReference type="InterPro" id="IPR036386">
    <property type="entry name" value="HscB_C_sf"/>
</dbReference>
<dbReference type="InterPro" id="IPR009073">
    <property type="entry name" value="HscB_oligo_C"/>
</dbReference>
<dbReference type="InterPro" id="IPR036869">
    <property type="entry name" value="J_dom_sf"/>
</dbReference>
<dbReference type="NCBIfam" id="TIGR00714">
    <property type="entry name" value="hscB"/>
    <property type="match status" value="1"/>
</dbReference>
<dbReference type="NCBIfam" id="NF003449">
    <property type="entry name" value="PRK05014.1"/>
    <property type="match status" value="1"/>
</dbReference>
<dbReference type="PANTHER" id="PTHR14021">
    <property type="entry name" value="IRON-SULFUR CLUSTER CO-CHAPERONE PROTEIN HSCB"/>
    <property type="match status" value="1"/>
</dbReference>
<dbReference type="PANTHER" id="PTHR14021:SF15">
    <property type="entry name" value="IRON-SULFUR CLUSTER CO-CHAPERONE PROTEIN HSCB"/>
    <property type="match status" value="1"/>
</dbReference>
<dbReference type="Pfam" id="PF07743">
    <property type="entry name" value="HSCB_C"/>
    <property type="match status" value="1"/>
</dbReference>
<dbReference type="SMART" id="SM00271">
    <property type="entry name" value="DnaJ"/>
    <property type="match status" value="1"/>
</dbReference>
<dbReference type="SUPFAM" id="SSF46565">
    <property type="entry name" value="Chaperone J-domain"/>
    <property type="match status" value="1"/>
</dbReference>
<dbReference type="SUPFAM" id="SSF47144">
    <property type="entry name" value="HSC20 (HSCB), C-terminal oligomerisation domain"/>
    <property type="match status" value="1"/>
</dbReference>
<dbReference type="PROSITE" id="PS50076">
    <property type="entry name" value="DNAJ_2"/>
    <property type="match status" value="1"/>
</dbReference>
<evidence type="ECO:0000255" key="1">
    <source>
        <dbReference type="HAMAP-Rule" id="MF_00682"/>
    </source>
</evidence>
<feature type="chain" id="PRO_1000083016" description="Co-chaperone protein HscB homolog">
    <location>
        <begin position="1"/>
        <end position="175"/>
    </location>
</feature>
<feature type="domain" description="J" evidence="1">
    <location>
        <begin position="2"/>
        <end position="76"/>
    </location>
</feature>
<sequence length="175" mass="19950">MNYFALFNLTPSFDVDKAALAATYQQLQKLTHPDRFATASERDKLIALQKNAQVNDGYQVLKTPLSRAEHMLELRGVELQHEQKTMQDGAFLMQQMEWREQLDDAQHASDPLTALESLDDEVAADIKRLLSELGGFLEQSDDAANENAANLVRKLKFLFKLRHEIEIKEDALSDF</sequence>